<dbReference type="EMBL" id="CP000038">
    <property type="protein sequence ID" value="AAZ90503.1"/>
    <property type="molecule type" value="Genomic_DNA"/>
</dbReference>
<dbReference type="RefSeq" id="WP_000999947.1">
    <property type="nucleotide sequence ID" value="NC_007384.1"/>
</dbReference>
<dbReference type="SMR" id="Q3YVG0"/>
<dbReference type="GeneID" id="93778137"/>
<dbReference type="KEGG" id="ssn:SSON_3980"/>
<dbReference type="HOGENOM" id="CLU_080880_3_0_6"/>
<dbReference type="Proteomes" id="UP000002529">
    <property type="component" value="Chromosome"/>
</dbReference>
<dbReference type="GO" id="GO:0005829">
    <property type="term" value="C:cytosol"/>
    <property type="evidence" value="ECO:0007669"/>
    <property type="project" value="TreeGrafter"/>
</dbReference>
<dbReference type="GO" id="GO:0008199">
    <property type="term" value="F:ferric iron binding"/>
    <property type="evidence" value="ECO:0007669"/>
    <property type="project" value="InterPro"/>
</dbReference>
<dbReference type="GO" id="GO:0008198">
    <property type="term" value="F:ferrous iron binding"/>
    <property type="evidence" value="ECO:0007669"/>
    <property type="project" value="TreeGrafter"/>
</dbReference>
<dbReference type="GO" id="GO:0016226">
    <property type="term" value="P:iron-sulfur cluster assembly"/>
    <property type="evidence" value="ECO:0007669"/>
    <property type="project" value="UniProtKB-UniRule"/>
</dbReference>
<dbReference type="CDD" id="cd00503">
    <property type="entry name" value="Frataxin"/>
    <property type="match status" value="1"/>
</dbReference>
<dbReference type="FunFam" id="3.30.920.10:FF:000001">
    <property type="entry name" value="Iron-sulfur cluster assembly protein CyaY"/>
    <property type="match status" value="1"/>
</dbReference>
<dbReference type="Gene3D" id="3.30.920.10">
    <property type="entry name" value="Frataxin/CyaY"/>
    <property type="match status" value="1"/>
</dbReference>
<dbReference type="HAMAP" id="MF_00142">
    <property type="entry name" value="CyaY"/>
    <property type="match status" value="1"/>
</dbReference>
<dbReference type="InterPro" id="IPR047584">
    <property type="entry name" value="CyaY"/>
</dbReference>
<dbReference type="InterPro" id="IPR002908">
    <property type="entry name" value="Frataxin/CyaY"/>
</dbReference>
<dbReference type="InterPro" id="IPR036524">
    <property type="entry name" value="Frataxin/CyaY_sf"/>
</dbReference>
<dbReference type="InterPro" id="IPR020895">
    <property type="entry name" value="Frataxin_CS"/>
</dbReference>
<dbReference type="NCBIfam" id="TIGR03421">
    <property type="entry name" value="FeS_CyaY"/>
    <property type="match status" value="1"/>
</dbReference>
<dbReference type="PANTHER" id="PTHR16821">
    <property type="entry name" value="FRATAXIN"/>
    <property type="match status" value="1"/>
</dbReference>
<dbReference type="PANTHER" id="PTHR16821:SF2">
    <property type="entry name" value="FRATAXIN, MITOCHONDRIAL"/>
    <property type="match status" value="1"/>
</dbReference>
<dbReference type="Pfam" id="PF01491">
    <property type="entry name" value="Frataxin_Cyay"/>
    <property type="match status" value="1"/>
</dbReference>
<dbReference type="SMART" id="SM01219">
    <property type="entry name" value="Frataxin_Cyay"/>
    <property type="match status" value="1"/>
</dbReference>
<dbReference type="SUPFAM" id="SSF55387">
    <property type="entry name" value="Frataxin/Nqo15-like"/>
    <property type="match status" value="1"/>
</dbReference>
<dbReference type="PROSITE" id="PS01344">
    <property type="entry name" value="FRATAXIN_1"/>
    <property type="match status" value="1"/>
</dbReference>
<dbReference type="PROSITE" id="PS50810">
    <property type="entry name" value="FRATAXIN_2"/>
    <property type="match status" value="1"/>
</dbReference>
<name>CYAY_SHISS</name>
<accession>Q3YVG0</accession>
<reference key="1">
    <citation type="journal article" date="2005" name="Nucleic Acids Res.">
        <title>Genome dynamics and diversity of Shigella species, the etiologic agents of bacillary dysentery.</title>
        <authorList>
            <person name="Yang F."/>
            <person name="Yang J."/>
            <person name="Zhang X."/>
            <person name="Chen L."/>
            <person name="Jiang Y."/>
            <person name="Yan Y."/>
            <person name="Tang X."/>
            <person name="Wang J."/>
            <person name="Xiong Z."/>
            <person name="Dong J."/>
            <person name="Xue Y."/>
            <person name="Zhu Y."/>
            <person name="Xu X."/>
            <person name="Sun L."/>
            <person name="Chen S."/>
            <person name="Nie H."/>
            <person name="Peng J."/>
            <person name="Xu J."/>
            <person name="Wang Y."/>
            <person name="Yuan Z."/>
            <person name="Wen Y."/>
            <person name="Yao Z."/>
            <person name="Shen Y."/>
            <person name="Qiang B."/>
            <person name="Hou Y."/>
            <person name="Yu J."/>
            <person name="Jin Q."/>
        </authorList>
    </citation>
    <scope>NUCLEOTIDE SEQUENCE [LARGE SCALE GENOMIC DNA]</scope>
    <source>
        <strain>Ss046</strain>
    </source>
</reference>
<gene>
    <name evidence="1" type="primary">cyaY</name>
    <name type="ordered locus">SSON_3980</name>
</gene>
<comment type="function">
    <text evidence="1">Involved in iron-sulfur (Fe-S) cluster assembly. May act as a regulator of Fe-S biogenesis.</text>
</comment>
<comment type="similarity">
    <text evidence="1">Belongs to the frataxin family.</text>
</comment>
<organism>
    <name type="scientific">Shigella sonnei (strain Ss046)</name>
    <dbReference type="NCBI Taxonomy" id="300269"/>
    <lineage>
        <taxon>Bacteria</taxon>
        <taxon>Pseudomonadati</taxon>
        <taxon>Pseudomonadota</taxon>
        <taxon>Gammaproteobacteria</taxon>
        <taxon>Enterobacterales</taxon>
        <taxon>Enterobacteriaceae</taxon>
        <taxon>Shigella</taxon>
    </lineage>
</organism>
<protein>
    <recommendedName>
        <fullName evidence="1">Iron-sulfur cluster assembly protein CyaY</fullName>
    </recommendedName>
</protein>
<proteinExistence type="inferred from homology"/>
<keyword id="KW-0408">Iron</keyword>
<keyword id="KW-0479">Metal-binding</keyword>
<keyword id="KW-1185">Reference proteome</keyword>
<sequence length="106" mass="12231">MNDSEFHRLADQLWLTIEERLDDWDGDSDIDCEINGGVLTITFENGSKIIINRQEPLHQVWLATKQGGYHFDLKGDEWICDRSGETFWDLLEQAATQQAGETVSFR</sequence>
<feature type="chain" id="PRO_1000010963" description="Iron-sulfur cluster assembly protein CyaY">
    <location>
        <begin position="1"/>
        <end position="106"/>
    </location>
</feature>
<evidence type="ECO:0000255" key="1">
    <source>
        <dbReference type="HAMAP-Rule" id="MF_00142"/>
    </source>
</evidence>